<keyword id="KW-0067">ATP-binding</keyword>
<keyword id="KW-0143">Chaperone</keyword>
<keyword id="KW-0547">Nucleotide-binding</keyword>
<keyword id="KW-0597">Phosphoprotein</keyword>
<keyword id="KW-1185">Reference proteome</keyword>
<keyword id="KW-0346">Stress response</keyword>
<accession>A5FZ19</accession>
<comment type="function">
    <text evidence="1">Acts as a chaperone.</text>
</comment>
<comment type="induction">
    <text evidence="1">By stress conditions e.g. heat shock.</text>
</comment>
<comment type="similarity">
    <text evidence="1">Belongs to the heat shock protein 70 family.</text>
</comment>
<protein>
    <recommendedName>
        <fullName evidence="1">Chaperone protein DnaK</fullName>
    </recommendedName>
    <alternativeName>
        <fullName evidence="1">HSP70</fullName>
    </alternativeName>
    <alternativeName>
        <fullName evidence="1">Heat shock 70 kDa protein</fullName>
    </alternativeName>
    <alternativeName>
        <fullName evidence="1">Heat shock protein 70</fullName>
    </alternativeName>
</protein>
<organism>
    <name type="scientific">Acidiphilium cryptum (strain JF-5)</name>
    <dbReference type="NCBI Taxonomy" id="349163"/>
    <lineage>
        <taxon>Bacteria</taxon>
        <taxon>Pseudomonadati</taxon>
        <taxon>Pseudomonadota</taxon>
        <taxon>Alphaproteobacteria</taxon>
        <taxon>Acetobacterales</taxon>
        <taxon>Acidocellaceae</taxon>
        <taxon>Acidiphilium</taxon>
    </lineage>
</organism>
<proteinExistence type="inferred from homology"/>
<name>DNAK_ACICJ</name>
<reference key="1">
    <citation type="submission" date="2007-05" db="EMBL/GenBank/DDBJ databases">
        <title>Complete sequence of chromosome of Acidiphilium cryptum JF-5.</title>
        <authorList>
            <consortium name="US DOE Joint Genome Institute"/>
            <person name="Copeland A."/>
            <person name="Lucas S."/>
            <person name="Lapidus A."/>
            <person name="Barry K."/>
            <person name="Detter J.C."/>
            <person name="Glavina del Rio T."/>
            <person name="Hammon N."/>
            <person name="Israni S."/>
            <person name="Dalin E."/>
            <person name="Tice H."/>
            <person name="Pitluck S."/>
            <person name="Sims D."/>
            <person name="Brettin T."/>
            <person name="Bruce D."/>
            <person name="Han C."/>
            <person name="Schmutz J."/>
            <person name="Larimer F."/>
            <person name="Land M."/>
            <person name="Hauser L."/>
            <person name="Kyrpides N."/>
            <person name="Kim E."/>
            <person name="Magnuson T."/>
            <person name="Richardson P."/>
        </authorList>
    </citation>
    <scope>NUCLEOTIDE SEQUENCE [LARGE SCALE GENOMIC DNA]</scope>
    <source>
        <strain>JF-5</strain>
    </source>
</reference>
<feature type="chain" id="PRO_1000059498" description="Chaperone protein DnaK">
    <location>
        <begin position="1"/>
        <end position="635"/>
    </location>
</feature>
<feature type="region of interest" description="Disordered" evidence="2">
    <location>
        <begin position="601"/>
        <end position="635"/>
    </location>
</feature>
<feature type="compositionally biased region" description="Low complexity" evidence="2">
    <location>
        <begin position="601"/>
        <end position="616"/>
    </location>
</feature>
<feature type="modified residue" description="Phosphothreonine; by autocatalysis" evidence="1">
    <location>
        <position position="198"/>
    </location>
</feature>
<dbReference type="EMBL" id="CP000697">
    <property type="protein sequence ID" value="ABQ30851.1"/>
    <property type="molecule type" value="Genomic_DNA"/>
</dbReference>
<dbReference type="RefSeq" id="WP_007421611.1">
    <property type="nucleotide sequence ID" value="NC_009484.1"/>
</dbReference>
<dbReference type="SMR" id="A5FZ19"/>
<dbReference type="STRING" id="349163.Acry_1646"/>
<dbReference type="KEGG" id="acr:Acry_1646"/>
<dbReference type="eggNOG" id="COG0443">
    <property type="taxonomic scope" value="Bacteria"/>
</dbReference>
<dbReference type="HOGENOM" id="CLU_005965_2_1_5"/>
<dbReference type="Proteomes" id="UP000000245">
    <property type="component" value="Chromosome"/>
</dbReference>
<dbReference type="GO" id="GO:0005524">
    <property type="term" value="F:ATP binding"/>
    <property type="evidence" value="ECO:0007669"/>
    <property type="project" value="UniProtKB-UniRule"/>
</dbReference>
<dbReference type="GO" id="GO:0140662">
    <property type="term" value="F:ATP-dependent protein folding chaperone"/>
    <property type="evidence" value="ECO:0007669"/>
    <property type="project" value="InterPro"/>
</dbReference>
<dbReference type="GO" id="GO:0051082">
    <property type="term" value="F:unfolded protein binding"/>
    <property type="evidence" value="ECO:0007669"/>
    <property type="project" value="InterPro"/>
</dbReference>
<dbReference type="CDD" id="cd11733">
    <property type="entry name" value="ASKHA_NBD_HSP70_HSPA9"/>
    <property type="match status" value="1"/>
</dbReference>
<dbReference type="FunFam" id="2.60.34.10:FF:000014">
    <property type="entry name" value="Chaperone protein DnaK HSP70"/>
    <property type="match status" value="1"/>
</dbReference>
<dbReference type="FunFam" id="3.30.420.40:FF:000020">
    <property type="entry name" value="Chaperone protein HscA homolog"/>
    <property type="match status" value="1"/>
</dbReference>
<dbReference type="FunFam" id="1.20.1270.10:FF:000001">
    <property type="entry name" value="Molecular chaperone DnaK"/>
    <property type="match status" value="1"/>
</dbReference>
<dbReference type="FunFam" id="3.30.420.40:FF:000004">
    <property type="entry name" value="Molecular chaperone DnaK"/>
    <property type="match status" value="1"/>
</dbReference>
<dbReference type="FunFam" id="3.90.640.10:FF:000003">
    <property type="entry name" value="Molecular chaperone DnaK"/>
    <property type="match status" value="1"/>
</dbReference>
<dbReference type="Gene3D" id="1.20.1270.10">
    <property type="match status" value="1"/>
</dbReference>
<dbReference type="Gene3D" id="3.30.420.40">
    <property type="match status" value="2"/>
</dbReference>
<dbReference type="Gene3D" id="3.90.640.10">
    <property type="entry name" value="Actin, Chain A, domain 4"/>
    <property type="match status" value="1"/>
</dbReference>
<dbReference type="Gene3D" id="2.60.34.10">
    <property type="entry name" value="Substrate Binding Domain Of DNAk, Chain A, domain 1"/>
    <property type="match status" value="1"/>
</dbReference>
<dbReference type="HAMAP" id="MF_00332">
    <property type="entry name" value="DnaK"/>
    <property type="match status" value="1"/>
</dbReference>
<dbReference type="InterPro" id="IPR043129">
    <property type="entry name" value="ATPase_NBD"/>
</dbReference>
<dbReference type="InterPro" id="IPR012725">
    <property type="entry name" value="Chaperone_DnaK"/>
</dbReference>
<dbReference type="InterPro" id="IPR018181">
    <property type="entry name" value="Heat_shock_70_CS"/>
</dbReference>
<dbReference type="InterPro" id="IPR029048">
    <property type="entry name" value="HSP70_C_sf"/>
</dbReference>
<dbReference type="InterPro" id="IPR029047">
    <property type="entry name" value="HSP70_peptide-bd_sf"/>
</dbReference>
<dbReference type="InterPro" id="IPR013126">
    <property type="entry name" value="Hsp_70_fam"/>
</dbReference>
<dbReference type="NCBIfam" id="NF001413">
    <property type="entry name" value="PRK00290.1"/>
    <property type="match status" value="1"/>
</dbReference>
<dbReference type="NCBIfam" id="NF003520">
    <property type="entry name" value="PRK05183.1"/>
    <property type="match status" value="1"/>
</dbReference>
<dbReference type="NCBIfam" id="TIGR02350">
    <property type="entry name" value="prok_dnaK"/>
    <property type="match status" value="1"/>
</dbReference>
<dbReference type="PANTHER" id="PTHR19375">
    <property type="entry name" value="HEAT SHOCK PROTEIN 70KDA"/>
    <property type="match status" value="1"/>
</dbReference>
<dbReference type="Pfam" id="PF00012">
    <property type="entry name" value="HSP70"/>
    <property type="match status" value="1"/>
</dbReference>
<dbReference type="PRINTS" id="PR00301">
    <property type="entry name" value="HEATSHOCK70"/>
</dbReference>
<dbReference type="SUPFAM" id="SSF53067">
    <property type="entry name" value="Actin-like ATPase domain"/>
    <property type="match status" value="2"/>
</dbReference>
<dbReference type="SUPFAM" id="SSF100934">
    <property type="entry name" value="Heat shock protein 70kD (HSP70), C-terminal subdomain"/>
    <property type="match status" value="1"/>
</dbReference>
<dbReference type="SUPFAM" id="SSF100920">
    <property type="entry name" value="Heat shock protein 70kD (HSP70), peptide-binding domain"/>
    <property type="match status" value="1"/>
</dbReference>
<dbReference type="PROSITE" id="PS00297">
    <property type="entry name" value="HSP70_1"/>
    <property type="match status" value="1"/>
</dbReference>
<dbReference type="PROSITE" id="PS00329">
    <property type="entry name" value="HSP70_2"/>
    <property type="match status" value="1"/>
</dbReference>
<dbReference type="PROSITE" id="PS01036">
    <property type="entry name" value="HSP70_3"/>
    <property type="match status" value="1"/>
</dbReference>
<gene>
    <name evidence="1" type="primary">dnaK</name>
    <name type="ordered locus">Acry_1646</name>
</gene>
<sequence>MSKVIGIDLGTTNSCVAIMEGKDVRVIENSEGARTTPSMVAFSESNERLVGQSAKRQAVTNPTNTLYAVKRLIGRRYDDPTVEKDKGLVSYNIVRGDNGDAWVESRGQRYAPSQISSFVLTKMKETAEAYLGEAVTQAVITVPAYFNDAQRQATKDAGKIAGLEVLRIINEPTAAALAYGMDKKQGGTIAVYDLGGGTFDISILELGDGVFEVKSTNGDTFLGGEDFDQRVIDYLAEEFKREQGIDLRKDKLALQRLKEAAEKAKIELSSSKETEINLPFITADASGPKHLVMKLTRAKLESLVDDLVERTLGPCRAALKDAGVTAGEIDEVILVGGMTRMPKVIETVKTFFGKEPARNVNPDEVVAIGAAIQGAVLKGDVKDVLLLDVTPLSLGIETLGGVFTRLIDRNTTIPTKKSQTFSTADDNQTAVTIKVYQGEREMAADNKLLGNFDLTGIPPAPRGVPQIEVTFDIDANGIVSVSAKDKATGKEQQIRIQASGGLSDTDIERMVKDAEANAAADKAKRELVDARNHADGLVHQTEKTLKDNEGKVSAQDKGEAEAAIAAVRSALEGSDLEAIKSATERLTQVAMRIGEAMYKAQAEAGAAQPGAETAAPGDKVVDAEFEDVDDKKKSA</sequence>
<evidence type="ECO:0000255" key="1">
    <source>
        <dbReference type="HAMAP-Rule" id="MF_00332"/>
    </source>
</evidence>
<evidence type="ECO:0000256" key="2">
    <source>
        <dbReference type="SAM" id="MobiDB-lite"/>
    </source>
</evidence>